<organism>
    <name type="scientific">Rattus norvegicus</name>
    <name type="common">Rat</name>
    <dbReference type="NCBI Taxonomy" id="10116"/>
    <lineage>
        <taxon>Eukaryota</taxon>
        <taxon>Metazoa</taxon>
        <taxon>Chordata</taxon>
        <taxon>Craniata</taxon>
        <taxon>Vertebrata</taxon>
        <taxon>Euteleostomi</taxon>
        <taxon>Mammalia</taxon>
        <taxon>Eutheria</taxon>
        <taxon>Euarchontoglires</taxon>
        <taxon>Glires</taxon>
        <taxon>Rodentia</taxon>
        <taxon>Myomorpha</taxon>
        <taxon>Muroidea</taxon>
        <taxon>Muridae</taxon>
        <taxon>Murinae</taxon>
        <taxon>Rattus</taxon>
    </lineage>
</organism>
<accession>Q5XIE9</accession>
<sequence>MGVTCVSQMPVAEGKSVQQTVELLTKKLEMLGAEKQGTFCVDCETYHTAASTLGSQGQAGKLMYVMHNSEYPLSCFALFENGPCLIADTNFDVLMVKLKGFFQSAKASKIETRGTRYQYCDFLVKVGTVTMGPSARGISVEVEYGPCVVASDCWSLLLEFLQSFLGSHTPGAPTVFGNRHDAVYGPADTMVQYMELFNKVRKQQQVPVAGIR</sequence>
<evidence type="ECO:0000250" key="1"/>
<evidence type="ECO:0000305" key="2"/>
<name>MED20_RAT</name>
<proteinExistence type="evidence at transcript level"/>
<comment type="function">
    <text evidence="1">Component of the Mediator complex, a coactivator involved in the regulated transcription of nearly all RNA polymerase II-dependent genes. Mediator functions as a bridge to convey information from gene-specific regulatory proteins to the basal RNA polymerase II transcription machinery. Mediator is recruited to promoters by direct interactions with regulatory proteins and serves as a scaffold for the assembly of a functional preinitiation complex with RNA polymerase II and the general transcription factors (By similarity).</text>
</comment>
<comment type="subunit">
    <text evidence="1">Component of the Mediator complex, which is composed of MED1, MED4, MED6, MED7, MED8, MED9, MED10, MED11, MED12, MED13, MED13L, MED14, MED15, MED16, MED17, MED18, MED19, MED20, MED21, MED22, MED23, MED24, MED25, MED26, MED27, MED29, MED30, MED31, CCNC, CDK8 and CDC2L6/CDK11. The MED12, MED13, CCNC and CDK8 subunits form a distinct module termed the CDK8 module. Mediator containing the CDK8 module is less active than Mediator lacking this module in supporting transcriptional activation. Individual preparations of the Mediator complex lacking one or more distinct subunits have been variously termed ARC, CRSP, DRIP, PC2, SMCC and TRAP. Interacts with PPARG (By similarity).</text>
</comment>
<comment type="subcellular location">
    <subcellularLocation>
        <location evidence="2">Nucleus</location>
    </subcellularLocation>
</comment>
<comment type="similarity">
    <text evidence="2">Belongs to the Mediator complex subunit 20 family.</text>
</comment>
<feature type="chain" id="PRO_0000308555" description="Mediator of RNA polymerase II transcription subunit 20">
    <location>
        <begin position="1"/>
        <end position="212"/>
    </location>
</feature>
<dbReference type="EMBL" id="BC083734">
    <property type="protein sequence ID" value="AAH83734.1"/>
    <property type="molecule type" value="mRNA"/>
</dbReference>
<dbReference type="RefSeq" id="NP_001013196.1">
    <property type="nucleotide sequence ID" value="NM_001013178.2"/>
</dbReference>
<dbReference type="SMR" id="Q5XIE9"/>
<dbReference type="FunCoup" id="Q5XIE9">
    <property type="interactions" value="4272"/>
</dbReference>
<dbReference type="STRING" id="10116.ENSRNOP00000018523"/>
<dbReference type="iPTMnet" id="Q5XIE9"/>
<dbReference type="PhosphoSitePlus" id="Q5XIE9"/>
<dbReference type="PaxDb" id="10116-ENSRNOP00000018523"/>
<dbReference type="Ensembl" id="ENSRNOT00000018523.8">
    <property type="protein sequence ID" value="ENSRNOP00000018523.5"/>
    <property type="gene ID" value="ENSRNOG00000013852.8"/>
</dbReference>
<dbReference type="GeneID" id="316209"/>
<dbReference type="KEGG" id="rno:316209"/>
<dbReference type="UCSC" id="RGD:1306415">
    <property type="organism name" value="rat"/>
</dbReference>
<dbReference type="AGR" id="RGD:1306415"/>
<dbReference type="CTD" id="9477"/>
<dbReference type="RGD" id="1306415">
    <property type="gene designation" value="Med20"/>
</dbReference>
<dbReference type="eggNOG" id="KOG4309">
    <property type="taxonomic scope" value="Eukaryota"/>
</dbReference>
<dbReference type="GeneTree" id="ENSGT00390000002060"/>
<dbReference type="HOGENOM" id="CLU_080044_1_0_1"/>
<dbReference type="InParanoid" id="Q5XIE9"/>
<dbReference type="OrthoDB" id="16078at9989"/>
<dbReference type="PhylomeDB" id="Q5XIE9"/>
<dbReference type="Reactome" id="R-RNO-9841922">
    <property type="pathway name" value="MLL4 and MLL3 complexes regulate expression of PPARG target genes in adipogenesis and hepatic steatosis"/>
</dbReference>
<dbReference type="PRO" id="PR:Q5XIE9"/>
<dbReference type="Proteomes" id="UP000002494">
    <property type="component" value="Chromosome 9"/>
</dbReference>
<dbReference type="Bgee" id="ENSRNOG00000013852">
    <property type="expression patterns" value="Expressed in heart and 19 other cell types or tissues"/>
</dbReference>
<dbReference type="ExpressionAtlas" id="Q5XIE9">
    <property type="expression patterns" value="baseline and differential"/>
</dbReference>
<dbReference type="GO" id="GO:0070847">
    <property type="term" value="C:core mediator complex"/>
    <property type="evidence" value="ECO:0000266"/>
    <property type="project" value="RGD"/>
</dbReference>
<dbReference type="GO" id="GO:0016592">
    <property type="term" value="C:mediator complex"/>
    <property type="evidence" value="ECO:0000266"/>
    <property type="project" value="RGD"/>
</dbReference>
<dbReference type="GO" id="GO:0005634">
    <property type="term" value="C:nucleus"/>
    <property type="evidence" value="ECO:0000266"/>
    <property type="project" value="RGD"/>
</dbReference>
<dbReference type="GO" id="GO:0000151">
    <property type="term" value="C:ubiquitin ligase complex"/>
    <property type="evidence" value="ECO:0000314"/>
    <property type="project" value="RGD"/>
</dbReference>
<dbReference type="GO" id="GO:0003713">
    <property type="term" value="F:transcription coactivator activity"/>
    <property type="evidence" value="ECO:0000318"/>
    <property type="project" value="GO_Central"/>
</dbReference>
<dbReference type="GO" id="GO:0016567">
    <property type="term" value="P:protein ubiquitination"/>
    <property type="evidence" value="ECO:0000314"/>
    <property type="project" value="RGD"/>
</dbReference>
<dbReference type="GO" id="GO:0006357">
    <property type="term" value="P:regulation of transcription by RNA polymerase II"/>
    <property type="evidence" value="ECO:0000318"/>
    <property type="project" value="GO_Central"/>
</dbReference>
<dbReference type="GO" id="GO:0035914">
    <property type="term" value="P:skeletal muscle cell differentiation"/>
    <property type="evidence" value="ECO:0000266"/>
    <property type="project" value="RGD"/>
</dbReference>
<dbReference type="InterPro" id="IPR013921">
    <property type="entry name" value="Mediator_Med20"/>
</dbReference>
<dbReference type="PANTHER" id="PTHR12465:SF0">
    <property type="entry name" value="MEDIATOR OF RNA POLYMERASE II TRANSCRIPTION SUBUNIT 20"/>
    <property type="match status" value="1"/>
</dbReference>
<dbReference type="PANTHER" id="PTHR12465">
    <property type="entry name" value="UBIQUITIN SPECIFIC PROTEASE HOMOLOG 49"/>
    <property type="match status" value="1"/>
</dbReference>
<dbReference type="Pfam" id="PF08612">
    <property type="entry name" value="Med20"/>
    <property type="match status" value="1"/>
</dbReference>
<protein>
    <recommendedName>
        <fullName>Mediator of RNA polymerase II transcription subunit 20</fullName>
    </recommendedName>
    <alternativeName>
        <fullName>Mediator complex subunit 20</fullName>
    </alternativeName>
    <alternativeName>
        <fullName>TRF-proximal protein homolog</fullName>
    </alternativeName>
</protein>
<reference key="1">
    <citation type="journal article" date="2004" name="Genome Res.">
        <title>The status, quality, and expansion of the NIH full-length cDNA project: the Mammalian Gene Collection (MGC).</title>
        <authorList>
            <consortium name="The MGC Project Team"/>
        </authorList>
    </citation>
    <scope>NUCLEOTIDE SEQUENCE [LARGE SCALE MRNA]</scope>
    <source>
        <tissue>Heart</tissue>
    </source>
</reference>
<keyword id="KW-0010">Activator</keyword>
<keyword id="KW-0539">Nucleus</keyword>
<keyword id="KW-1185">Reference proteome</keyword>
<keyword id="KW-0804">Transcription</keyword>
<keyword id="KW-0805">Transcription regulation</keyword>
<gene>
    <name type="primary">Med20</name>
    <name type="synonym">Trfp</name>
</gene>